<organism>
    <name type="scientific">Syntrophobacter fumaroxidans (strain DSM 10017 / MPOB)</name>
    <dbReference type="NCBI Taxonomy" id="335543"/>
    <lineage>
        <taxon>Bacteria</taxon>
        <taxon>Pseudomonadati</taxon>
        <taxon>Thermodesulfobacteriota</taxon>
        <taxon>Syntrophobacteria</taxon>
        <taxon>Syntrophobacterales</taxon>
        <taxon>Syntrophobacteraceae</taxon>
        <taxon>Syntrophobacter</taxon>
    </lineage>
</organism>
<name>GPDA_SYNFM</name>
<gene>
    <name evidence="1" type="primary">gpsA</name>
    <name type="ordered locus">Sfum_2691</name>
</gene>
<comment type="function">
    <text evidence="1">Catalyzes the reduction of the glycolytic intermediate dihydroxyacetone phosphate (DHAP) to sn-glycerol 3-phosphate (G3P), the key precursor for phospholipid synthesis.</text>
</comment>
<comment type="catalytic activity">
    <reaction evidence="1">
        <text>sn-glycerol 3-phosphate + NAD(+) = dihydroxyacetone phosphate + NADH + H(+)</text>
        <dbReference type="Rhea" id="RHEA:11092"/>
        <dbReference type="ChEBI" id="CHEBI:15378"/>
        <dbReference type="ChEBI" id="CHEBI:57540"/>
        <dbReference type="ChEBI" id="CHEBI:57597"/>
        <dbReference type="ChEBI" id="CHEBI:57642"/>
        <dbReference type="ChEBI" id="CHEBI:57945"/>
        <dbReference type="EC" id="1.1.1.94"/>
    </reaction>
    <physiologicalReaction direction="right-to-left" evidence="1">
        <dbReference type="Rhea" id="RHEA:11094"/>
    </physiologicalReaction>
</comment>
<comment type="catalytic activity">
    <reaction evidence="1">
        <text>sn-glycerol 3-phosphate + NADP(+) = dihydroxyacetone phosphate + NADPH + H(+)</text>
        <dbReference type="Rhea" id="RHEA:11096"/>
        <dbReference type="ChEBI" id="CHEBI:15378"/>
        <dbReference type="ChEBI" id="CHEBI:57597"/>
        <dbReference type="ChEBI" id="CHEBI:57642"/>
        <dbReference type="ChEBI" id="CHEBI:57783"/>
        <dbReference type="ChEBI" id="CHEBI:58349"/>
        <dbReference type="EC" id="1.1.1.94"/>
    </reaction>
    <physiologicalReaction direction="right-to-left" evidence="1">
        <dbReference type="Rhea" id="RHEA:11098"/>
    </physiologicalReaction>
</comment>
<comment type="pathway">
    <text evidence="1">Membrane lipid metabolism; glycerophospholipid metabolism.</text>
</comment>
<comment type="subcellular location">
    <subcellularLocation>
        <location evidence="1">Cytoplasm</location>
    </subcellularLocation>
</comment>
<comment type="similarity">
    <text evidence="1">Belongs to the NAD-dependent glycerol-3-phosphate dehydrogenase family.</text>
</comment>
<keyword id="KW-0963">Cytoplasm</keyword>
<keyword id="KW-0444">Lipid biosynthesis</keyword>
<keyword id="KW-0443">Lipid metabolism</keyword>
<keyword id="KW-0520">NAD</keyword>
<keyword id="KW-0521">NADP</keyword>
<keyword id="KW-0547">Nucleotide-binding</keyword>
<keyword id="KW-0560">Oxidoreductase</keyword>
<keyword id="KW-0594">Phospholipid biosynthesis</keyword>
<keyword id="KW-1208">Phospholipid metabolism</keyword>
<keyword id="KW-1185">Reference proteome</keyword>
<proteinExistence type="inferred from homology"/>
<feature type="chain" id="PRO_1000205868" description="Glycerol-3-phosphate dehydrogenase [NAD(P)+]">
    <location>
        <begin position="1"/>
        <end position="340"/>
    </location>
</feature>
<feature type="active site" description="Proton acceptor" evidence="1">
    <location>
        <position position="195"/>
    </location>
</feature>
<feature type="binding site" evidence="1">
    <location>
        <position position="14"/>
    </location>
    <ligand>
        <name>NADPH</name>
        <dbReference type="ChEBI" id="CHEBI:57783"/>
    </ligand>
</feature>
<feature type="binding site" evidence="1">
    <location>
        <position position="15"/>
    </location>
    <ligand>
        <name>NADPH</name>
        <dbReference type="ChEBI" id="CHEBI:57783"/>
    </ligand>
</feature>
<feature type="binding site" evidence="1">
    <location>
        <position position="109"/>
    </location>
    <ligand>
        <name>NADPH</name>
        <dbReference type="ChEBI" id="CHEBI:57783"/>
    </ligand>
</feature>
<feature type="binding site" evidence="1">
    <location>
        <position position="109"/>
    </location>
    <ligand>
        <name>sn-glycerol 3-phosphate</name>
        <dbReference type="ChEBI" id="CHEBI:57597"/>
    </ligand>
</feature>
<feature type="binding site" evidence="1">
    <location>
        <position position="140"/>
    </location>
    <ligand>
        <name>sn-glycerol 3-phosphate</name>
        <dbReference type="ChEBI" id="CHEBI:57597"/>
    </ligand>
</feature>
<feature type="binding site" evidence="1">
    <location>
        <position position="142"/>
    </location>
    <ligand>
        <name>sn-glycerol 3-phosphate</name>
        <dbReference type="ChEBI" id="CHEBI:57597"/>
    </ligand>
</feature>
<feature type="binding site" evidence="1">
    <location>
        <position position="144"/>
    </location>
    <ligand>
        <name>NADPH</name>
        <dbReference type="ChEBI" id="CHEBI:57783"/>
    </ligand>
</feature>
<feature type="binding site" evidence="1">
    <location>
        <position position="195"/>
    </location>
    <ligand>
        <name>sn-glycerol 3-phosphate</name>
        <dbReference type="ChEBI" id="CHEBI:57597"/>
    </ligand>
</feature>
<feature type="binding site" evidence="1">
    <location>
        <position position="248"/>
    </location>
    <ligand>
        <name>sn-glycerol 3-phosphate</name>
        <dbReference type="ChEBI" id="CHEBI:57597"/>
    </ligand>
</feature>
<feature type="binding site" evidence="1">
    <location>
        <position position="258"/>
    </location>
    <ligand>
        <name>sn-glycerol 3-phosphate</name>
        <dbReference type="ChEBI" id="CHEBI:57597"/>
    </ligand>
</feature>
<feature type="binding site" evidence="1">
    <location>
        <position position="259"/>
    </location>
    <ligand>
        <name>NADPH</name>
        <dbReference type="ChEBI" id="CHEBI:57783"/>
    </ligand>
</feature>
<feature type="binding site" evidence="1">
    <location>
        <position position="259"/>
    </location>
    <ligand>
        <name>sn-glycerol 3-phosphate</name>
        <dbReference type="ChEBI" id="CHEBI:57597"/>
    </ligand>
</feature>
<feature type="binding site" evidence="1">
    <location>
        <position position="260"/>
    </location>
    <ligand>
        <name>sn-glycerol 3-phosphate</name>
        <dbReference type="ChEBI" id="CHEBI:57597"/>
    </ligand>
</feature>
<feature type="binding site" evidence="1">
    <location>
        <position position="283"/>
    </location>
    <ligand>
        <name>NADPH</name>
        <dbReference type="ChEBI" id="CHEBI:57783"/>
    </ligand>
</feature>
<feature type="binding site" evidence="1">
    <location>
        <position position="285"/>
    </location>
    <ligand>
        <name>NADPH</name>
        <dbReference type="ChEBI" id="CHEBI:57783"/>
    </ligand>
</feature>
<protein>
    <recommendedName>
        <fullName evidence="1">Glycerol-3-phosphate dehydrogenase [NAD(P)+]</fullName>
        <ecNumber evidence="1">1.1.1.94</ecNumber>
    </recommendedName>
    <alternativeName>
        <fullName evidence="1">NAD(P)(+)-dependent glycerol-3-phosphate dehydrogenase</fullName>
    </alternativeName>
    <alternativeName>
        <fullName evidence="1">NAD(P)H-dependent dihydroxyacetone-phosphate reductase</fullName>
    </alternativeName>
</protein>
<evidence type="ECO:0000255" key="1">
    <source>
        <dbReference type="HAMAP-Rule" id="MF_00394"/>
    </source>
</evidence>
<accession>A0LLR7</accession>
<sequence>MKPGGPIGVVGAGSWGTTLAQVIADKGFEVDLWVFEPELCKTIRETRQNDLYLPGVVLSGRINAHNDLDRVVKNHDLLIMVVPSHVYRNVATAMIPFLKPDAVVVNATKGIENDTLLTMSGIWREVLPPGLQVRVLCLSGPSFAREVARKVPTAVTLAGDELQTAKAVQHVISTGYFRIYTSLDKIGVEIAGASKNVIALAAGVSDGMSFGYNSRAALITRGLAEITRLGVKMGSNPLTFLGLAGIGDLLLTCTGDLSRNRTVGIQLGQGRRIKDILAEMRMVAEGVKTAKSIHFLARRIGVEMPICEQVYRVIYEDKDPRVVVRELMERDLKHELELGH</sequence>
<dbReference type="EC" id="1.1.1.94" evidence="1"/>
<dbReference type="EMBL" id="CP000478">
    <property type="protein sequence ID" value="ABK18369.1"/>
    <property type="molecule type" value="Genomic_DNA"/>
</dbReference>
<dbReference type="RefSeq" id="WP_011699536.1">
    <property type="nucleotide sequence ID" value="NC_008554.1"/>
</dbReference>
<dbReference type="SMR" id="A0LLR7"/>
<dbReference type="FunCoup" id="A0LLR7">
    <property type="interactions" value="469"/>
</dbReference>
<dbReference type="STRING" id="335543.Sfum_2691"/>
<dbReference type="KEGG" id="sfu:Sfum_2691"/>
<dbReference type="eggNOG" id="COG0240">
    <property type="taxonomic scope" value="Bacteria"/>
</dbReference>
<dbReference type="HOGENOM" id="CLU_033449_0_2_7"/>
<dbReference type="InParanoid" id="A0LLR7"/>
<dbReference type="OrthoDB" id="9812273at2"/>
<dbReference type="UniPathway" id="UPA00940"/>
<dbReference type="Proteomes" id="UP000001784">
    <property type="component" value="Chromosome"/>
</dbReference>
<dbReference type="GO" id="GO:0005829">
    <property type="term" value="C:cytosol"/>
    <property type="evidence" value="ECO:0007669"/>
    <property type="project" value="TreeGrafter"/>
</dbReference>
<dbReference type="GO" id="GO:0047952">
    <property type="term" value="F:glycerol-3-phosphate dehydrogenase [NAD(P)+] activity"/>
    <property type="evidence" value="ECO:0007669"/>
    <property type="project" value="UniProtKB-UniRule"/>
</dbReference>
<dbReference type="GO" id="GO:0051287">
    <property type="term" value="F:NAD binding"/>
    <property type="evidence" value="ECO:0007669"/>
    <property type="project" value="InterPro"/>
</dbReference>
<dbReference type="GO" id="GO:0005975">
    <property type="term" value="P:carbohydrate metabolic process"/>
    <property type="evidence" value="ECO:0007669"/>
    <property type="project" value="InterPro"/>
</dbReference>
<dbReference type="GO" id="GO:0046167">
    <property type="term" value="P:glycerol-3-phosphate biosynthetic process"/>
    <property type="evidence" value="ECO:0007669"/>
    <property type="project" value="UniProtKB-UniRule"/>
</dbReference>
<dbReference type="GO" id="GO:0046168">
    <property type="term" value="P:glycerol-3-phosphate catabolic process"/>
    <property type="evidence" value="ECO:0007669"/>
    <property type="project" value="InterPro"/>
</dbReference>
<dbReference type="GO" id="GO:0006650">
    <property type="term" value="P:glycerophospholipid metabolic process"/>
    <property type="evidence" value="ECO:0007669"/>
    <property type="project" value="UniProtKB-UniRule"/>
</dbReference>
<dbReference type="GO" id="GO:0008654">
    <property type="term" value="P:phospholipid biosynthetic process"/>
    <property type="evidence" value="ECO:0007669"/>
    <property type="project" value="UniProtKB-KW"/>
</dbReference>
<dbReference type="FunFam" id="1.10.1040.10:FF:000001">
    <property type="entry name" value="Glycerol-3-phosphate dehydrogenase [NAD(P)+]"/>
    <property type="match status" value="1"/>
</dbReference>
<dbReference type="FunFam" id="3.40.50.720:FF:000019">
    <property type="entry name" value="Glycerol-3-phosphate dehydrogenase [NAD(P)+]"/>
    <property type="match status" value="1"/>
</dbReference>
<dbReference type="Gene3D" id="1.10.1040.10">
    <property type="entry name" value="N-(1-d-carboxylethyl)-l-norvaline Dehydrogenase, domain 2"/>
    <property type="match status" value="1"/>
</dbReference>
<dbReference type="Gene3D" id="3.40.50.720">
    <property type="entry name" value="NAD(P)-binding Rossmann-like Domain"/>
    <property type="match status" value="1"/>
</dbReference>
<dbReference type="HAMAP" id="MF_00394">
    <property type="entry name" value="NAD_Glyc3P_dehydrog"/>
    <property type="match status" value="1"/>
</dbReference>
<dbReference type="InterPro" id="IPR008927">
    <property type="entry name" value="6-PGluconate_DH-like_C_sf"/>
</dbReference>
<dbReference type="InterPro" id="IPR013328">
    <property type="entry name" value="6PGD_dom2"/>
</dbReference>
<dbReference type="InterPro" id="IPR006168">
    <property type="entry name" value="G3P_DH_NAD-dep"/>
</dbReference>
<dbReference type="InterPro" id="IPR006109">
    <property type="entry name" value="G3P_DH_NAD-dep_C"/>
</dbReference>
<dbReference type="InterPro" id="IPR011128">
    <property type="entry name" value="G3P_DH_NAD-dep_N"/>
</dbReference>
<dbReference type="InterPro" id="IPR036291">
    <property type="entry name" value="NAD(P)-bd_dom_sf"/>
</dbReference>
<dbReference type="NCBIfam" id="NF000940">
    <property type="entry name" value="PRK00094.1-2"/>
    <property type="match status" value="1"/>
</dbReference>
<dbReference type="NCBIfam" id="NF000942">
    <property type="entry name" value="PRK00094.1-4"/>
    <property type="match status" value="1"/>
</dbReference>
<dbReference type="PANTHER" id="PTHR11728">
    <property type="entry name" value="GLYCEROL-3-PHOSPHATE DEHYDROGENASE"/>
    <property type="match status" value="1"/>
</dbReference>
<dbReference type="PANTHER" id="PTHR11728:SF1">
    <property type="entry name" value="GLYCEROL-3-PHOSPHATE DEHYDROGENASE [NAD(+)] 2, CHLOROPLASTIC"/>
    <property type="match status" value="1"/>
</dbReference>
<dbReference type="Pfam" id="PF07479">
    <property type="entry name" value="NAD_Gly3P_dh_C"/>
    <property type="match status" value="1"/>
</dbReference>
<dbReference type="Pfam" id="PF01210">
    <property type="entry name" value="NAD_Gly3P_dh_N"/>
    <property type="match status" value="1"/>
</dbReference>
<dbReference type="PIRSF" id="PIRSF000114">
    <property type="entry name" value="Glycerol-3-P_dh"/>
    <property type="match status" value="1"/>
</dbReference>
<dbReference type="PRINTS" id="PR00077">
    <property type="entry name" value="GPDHDRGNASE"/>
</dbReference>
<dbReference type="SUPFAM" id="SSF48179">
    <property type="entry name" value="6-phosphogluconate dehydrogenase C-terminal domain-like"/>
    <property type="match status" value="1"/>
</dbReference>
<dbReference type="SUPFAM" id="SSF51735">
    <property type="entry name" value="NAD(P)-binding Rossmann-fold domains"/>
    <property type="match status" value="1"/>
</dbReference>
<dbReference type="PROSITE" id="PS00957">
    <property type="entry name" value="NAD_G3PDH"/>
    <property type="match status" value="1"/>
</dbReference>
<reference key="1">
    <citation type="submission" date="2006-10" db="EMBL/GenBank/DDBJ databases">
        <title>Complete sequence of Syntrophobacter fumaroxidans MPOB.</title>
        <authorList>
            <consortium name="US DOE Joint Genome Institute"/>
            <person name="Copeland A."/>
            <person name="Lucas S."/>
            <person name="Lapidus A."/>
            <person name="Barry K."/>
            <person name="Detter J.C."/>
            <person name="Glavina del Rio T."/>
            <person name="Hammon N."/>
            <person name="Israni S."/>
            <person name="Pitluck S."/>
            <person name="Goltsman E.G."/>
            <person name="Martinez M."/>
            <person name="Schmutz J."/>
            <person name="Larimer F."/>
            <person name="Land M."/>
            <person name="Hauser L."/>
            <person name="Kyrpides N."/>
            <person name="Kim E."/>
            <person name="Boone D.R."/>
            <person name="Brockman F."/>
            <person name="Culley D."/>
            <person name="Ferry J."/>
            <person name="Gunsalus R."/>
            <person name="McInerney M.J."/>
            <person name="Morrison M."/>
            <person name="Plugge C."/>
            <person name="Rohlin L."/>
            <person name="Scholten J."/>
            <person name="Sieber J."/>
            <person name="Stams A.J.M."/>
            <person name="Worm P."/>
            <person name="Henstra A.M."/>
            <person name="Richardson P."/>
        </authorList>
    </citation>
    <scope>NUCLEOTIDE SEQUENCE [LARGE SCALE GENOMIC DNA]</scope>
    <source>
        <strain>DSM 10017 / MPOB</strain>
    </source>
</reference>